<dbReference type="EMBL" id="AF532861">
    <property type="protein sequence ID" value="AAP21838.1"/>
    <property type="molecule type" value="mRNA"/>
</dbReference>
<dbReference type="EMBL" id="AY311478">
    <property type="protein sequence ID" value="AAP74960.1"/>
    <property type="molecule type" value="mRNA"/>
</dbReference>
<dbReference type="EMBL" id="BC129084">
    <property type="protein sequence ID" value="AAI29085.1"/>
    <property type="molecule type" value="mRNA"/>
</dbReference>
<dbReference type="RefSeq" id="NP_852042.1">
    <molecule id="Q80WD0-1"/>
    <property type="nucleotide sequence ID" value="NM_181377.3"/>
</dbReference>
<dbReference type="SMR" id="Q80WD0"/>
<dbReference type="FunCoup" id="Q80WD0">
    <property type="interactions" value="813"/>
</dbReference>
<dbReference type="STRING" id="10116.ENSRNOP00000058866"/>
<dbReference type="PhosphoSitePlus" id="Q80WD0"/>
<dbReference type="PaxDb" id="10116-ENSRNOP00000058866"/>
<dbReference type="Ensembl" id="ENSRNOT00000067414.4">
    <molecule id="Q80WD0-1"/>
    <property type="protein sequence ID" value="ENSRNOP00000058866.1"/>
    <property type="gene ID" value="ENSRNOG00000003121.7"/>
</dbReference>
<dbReference type="GeneID" id="303311"/>
<dbReference type="KEGG" id="rno:303311"/>
<dbReference type="AGR" id="RGD:727812"/>
<dbReference type="CTD" id="146760"/>
<dbReference type="RGD" id="727812">
    <property type="gene designation" value="Rtn4rl1"/>
</dbReference>
<dbReference type="eggNOG" id="KOG0619">
    <property type="taxonomic scope" value="Eukaryota"/>
</dbReference>
<dbReference type="GeneTree" id="ENSGT00940000157112"/>
<dbReference type="InParanoid" id="Q80WD0"/>
<dbReference type="OrthoDB" id="40296at9989"/>
<dbReference type="PhylomeDB" id="Q80WD0"/>
<dbReference type="TreeFam" id="TF330080"/>
<dbReference type="PRO" id="PR:Q80WD0"/>
<dbReference type="Proteomes" id="UP000002494">
    <property type="component" value="Chromosome 10"/>
</dbReference>
<dbReference type="Bgee" id="ENSRNOG00000003121">
    <property type="expression patterns" value="Expressed in frontal cortex and 20 other cell types or tissues"/>
</dbReference>
<dbReference type="GO" id="GO:0042995">
    <property type="term" value="C:cell projection"/>
    <property type="evidence" value="ECO:0007669"/>
    <property type="project" value="UniProtKB-SubCell"/>
</dbReference>
<dbReference type="GO" id="GO:0009986">
    <property type="term" value="C:cell surface"/>
    <property type="evidence" value="ECO:0000314"/>
    <property type="project" value="UniProtKB"/>
</dbReference>
<dbReference type="GO" id="GO:0045121">
    <property type="term" value="C:membrane raft"/>
    <property type="evidence" value="ECO:0007669"/>
    <property type="project" value="UniProtKB-SubCell"/>
</dbReference>
<dbReference type="GO" id="GO:0043204">
    <property type="term" value="C:perikaryon"/>
    <property type="evidence" value="ECO:0007669"/>
    <property type="project" value="UniProtKB-SubCell"/>
</dbReference>
<dbReference type="GO" id="GO:0005886">
    <property type="term" value="C:plasma membrane"/>
    <property type="evidence" value="ECO:0000250"/>
    <property type="project" value="UniProtKB"/>
</dbReference>
<dbReference type="GO" id="GO:0098552">
    <property type="term" value="C:side of membrane"/>
    <property type="evidence" value="ECO:0007669"/>
    <property type="project" value="UniProtKB-KW"/>
</dbReference>
<dbReference type="GO" id="GO:0035374">
    <property type="term" value="F:chondroitin sulfate binding"/>
    <property type="evidence" value="ECO:0000250"/>
    <property type="project" value="UniProtKB"/>
</dbReference>
<dbReference type="GO" id="GO:0008201">
    <property type="term" value="F:heparin binding"/>
    <property type="evidence" value="ECO:0000250"/>
    <property type="project" value="UniProtKB"/>
</dbReference>
<dbReference type="GO" id="GO:0048495">
    <property type="term" value="F:Roundabout binding"/>
    <property type="evidence" value="ECO:0000318"/>
    <property type="project" value="GO_Central"/>
</dbReference>
<dbReference type="GO" id="GO:0038023">
    <property type="term" value="F:signaling receptor activity"/>
    <property type="evidence" value="ECO:0000250"/>
    <property type="project" value="UniProtKB"/>
</dbReference>
<dbReference type="GO" id="GO:0022038">
    <property type="term" value="P:corpus callosum development"/>
    <property type="evidence" value="ECO:0000266"/>
    <property type="project" value="RGD"/>
</dbReference>
<dbReference type="GO" id="GO:0050919">
    <property type="term" value="P:negative chemotaxis"/>
    <property type="evidence" value="ECO:0000318"/>
    <property type="project" value="GO_Central"/>
</dbReference>
<dbReference type="GO" id="GO:0048681">
    <property type="term" value="P:negative regulation of axon regeneration"/>
    <property type="evidence" value="ECO:0000250"/>
    <property type="project" value="UniProtKB"/>
</dbReference>
<dbReference type="GO" id="GO:0010977">
    <property type="term" value="P:negative regulation of neuron projection development"/>
    <property type="evidence" value="ECO:0000250"/>
    <property type="project" value="UniProtKB"/>
</dbReference>
<dbReference type="FunFam" id="3.80.10.10:FF:000018">
    <property type="entry name" value="Reticulon 4 receptor"/>
    <property type="match status" value="1"/>
</dbReference>
<dbReference type="Gene3D" id="3.80.10.10">
    <property type="entry name" value="Ribonuclease Inhibitor"/>
    <property type="match status" value="1"/>
</dbReference>
<dbReference type="InterPro" id="IPR001611">
    <property type="entry name" value="Leu-rich_rpt"/>
</dbReference>
<dbReference type="InterPro" id="IPR003591">
    <property type="entry name" value="Leu-rich_rpt_typical-subtyp"/>
</dbReference>
<dbReference type="InterPro" id="IPR032675">
    <property type="entry name" value="LRR_dom_sf"/>
</dbReference>
<dbReference type="InterPro" id="IPR050541">
    <property type="entry name" value="LRR_TM_domain-containing"/>
</dbReference>
<dbReference type="PANTHER" id="PTHR24369">
    <property type="entry name" value="ANTIGEN BSP, PUTATIVE-RELATED"/>
    <property type="match status" value="1"/>
</dbReference>
<dbReference type="PANTHER" id="PTHR24369:SF196">
    <property type="entry name" value="RETICULON 4 RECEPTOR LIKE 1"/>
    <property type="match status" value="1"/>
</dbReference>
<dbReference type="Pfam" id="PF13855">
    <property type="entry name" value="LRR_8"/>
    <property type="match status" value="3"/>
</dbReference>
<dbReference type="SMART" id="SM00369">
    <property type="entry name" value="LRR_TYP"/>
    <property type="match status" value="7"/>
</dbReference>
<dbReference type="SUPFAM" id="SSF52058">
    <property type="entry name" value="L domain-like"/>
    <property type="match status" value="1"/>
</dbReference>
<dbReference type="PROSITE" id="PS51450">
    <property type="entry name" value="LRR"/>
    <property type="match status" value="6"/>
</dbReference>
<feature type="signal peptide" evidence="3">
    <location>
        <begin position="1"/>
        <end position="24"/>
    </location>
</feature>
<feature type="chain" id="PRO_0000046046" description="Reticulon-4 receptor-like 1">
    <location>
        <begin position="25"/>
        <end position="424"/>
    </location>
</feature>
<feature type="propeptide" id="PRO_0000046047" description="Removed in mature form" evidence="3">
    <location>
        <begin position="425"/>
        <end position="445"/>
    </location>
</feature>
<feature type="transmembrane region" description="Helical" evidence="3">
    <location>
        <begin position="424"/>
        <end position="444"/>
    </location>
</feature>
<feature type="domain" description="LRRNT">
    <location>
        <begin position="25"/>
        <end position="54"/>
    </location>
</feature>
<feature type="repeat" description="LRR 1">
    <location>
        <begin position="55"/>
        <end position="76"/>
    </location>
</feature>
<feature type="repeat" description="LRR 2">
    <location>
        <begin position="77"/>
        <end position="98"/>
    </location>
</feature>
<feature type="repeat" description="LRR 3">
    <location>
        <begin position="101"/>
        <end position="123"/>
    </location>
</feature>
<feature type="repeat" description="LRR 4">
    <location>
        <begin position="126"/>
        <end position="147"/>
    </location>
</feature>
<feature type="repeat" description="LRR 5">
    <location>
        <begin position="150"/>
        <end position="171"/>
    </location>
</feature>
<feature type="repeat" description="LRR 6">
    <location>
        <begin position="174"/>
        <end position="195"/>
    </location>
</feature>
<feature type="repeat" description="LRR 7">
    <location>
        <begin position="198"/>
        <end position="219"/>
    </location>
</feature>
<feature type="repeat" description="LRR 8">
    <location>
        <begin position="222"/>
        <end position="243"/>
    </location>
</feature>
<feature type="domain" description="LRRCT">
    <location>
        <begin position="255"/>
        <end position="306"/>
    </location>
</feature>
<feature type="region of interest" description="Disordered" evidence="4">
    <location>
        <begin position="304"/>
        <end position="380"/>
    </location>
</feature>
<feature type="region of interest" description="Disordered" evidence="4">
    <location>
        <begin position="401"/>
        <end position="421"/>
    </location>
</feature>
<feature type="compositionally biased region" description="Basic residues" evidence="4">
    <location>
        <begin position="352"/>
        <end position="366"/>
    </location>
</feature>
<feature type="compositionally biased region" description="Basic residues" evidence="4">
    <location>
        <begin position="401"/>
        <end position="413"/>
    </location>
</feature>
<feature type="lipid moiety-binding region" description="GPI-anchor amidated serine" evidence="3">
    <location>
        <position position="424"/>
    </location>
</feature>
<feature type="splice variant" id="VSP_051945" description="In isoform 2." evidence="11">
    <location>
        <begin position="1"/>
        <end position="7"/>
    </location>
</feature>
<feature type="splice variant" id="VSP_051946" description="In isoform 2." evidence="11">
    <original>V</original>
    <variation>M</variation>
    <location>
        <position position="8"/>
    </location>
</feature>
<accession>Q80WD0</accession>
<accession>A1L1I9</accession>
<accession>Q7TQ96</accession>
<organism>
    <name type="scientific">Rattus norvegicus</name>
    <name type="common">Rat</name>
    <dbReference type="NCBI Taxonomy" id="10116"/>
    <lineage>
        <taxon>Eukaryota</taxon>
        <taxon>Metazoa</taxon>
        <taxon>Chordata</taxon>
        <taxon>Craniata</taxon>
        <taxon>Vertebrata</taxon>
        <taxon>Euteleostomi</taxon>
        <taxon>Mammalia</taxon>
        <taxon>Eutheria</taxon>
        <taxon>Euarchontoglires</taxon>
        <taxon>Glires</taxon>
        <taxon>Rodentia</taxon>
        <taxon>Myomorpha</taxon>
        <taxon>Muroidea</taxon>
        <taxon>Muridae</taxon>
        <taxon>Murinae</taxon>
        <taxon>Rattus</taxon>
    </lineage>
</organism>
<keyword id="KW-0025">Alternative splicing</keyword>
<keyword id="KW-1003">Cell membrane</keyword>
<keyword id="KW-0966">Cell projection</keyword>
<keyword id="KW-0325">Glycoprotein</keyword>
<keyword id="KW-0336">GPI-anchor</keyword>
<keyword id="KW-0433">Leucine-rich repeat</keyword>
<keyword id="KW-0449">Lipoprotein</keyword>
<keyword id="KW-0472">Membrane</keyword>
<keyword id="KW-0675">Receptor</keyword>
<keyword id="KW-1185">Reference proteome</keyword>
<keyword id="KW-0677">Repeat</keyword>
<keyword id="KW-0732">Signal</keyword>
<keyword id="KW-0812">Transmembrane</keyword>
<keyword id="KW-1133">Transmembrane helix</keyword>
<comment type="function">
    <text evidence="2 7">Cell surface receptor. Plays a functionally redundant role in postnatal brain development and in regulating axon regeneration in the adult central nervous system. Contributes to normal axon migration across the brain midline and normal formation of the corpus callosum. Protects motoneurons against apoptosis; protection against apoptosis is probably mediated by MAG. Plays a role in inhibiting neurite outgrowth and axon regeneration via its binding to neuronal chondroitin sulfate proteoglycans. Binds heparin (By similarity). Like other family members, plays a role in restricting the number dendritic spines and the number of synapses that are formed during brain development (PubMed:22325200). Signaling mediates activation of Rho and downstream reorganization of the actin cytoskeleton (PubMed:22325200).</text>
</comment>
<comment type="subunit">
    <text evidence="2 6">Identified in a complex that contains RTN4R, RTN4RL1 and NGFR; the interaction depends on the presence of chondroitin sulfate proteoglycans (By similarity). Does not interact with MAG, OMG and RTN4 (PubMed:15673660).</text>
</comment>
<comment type="subcellular location">
    <subcellularLocation>
        <location evidence="6">Cell membrane</location>
        <topology evidence="12">Lipid-anchor</topology>
        <topology evidence="12">GPI-anchor</topology>
    </subcellularLocation>
    <subcellularLocation>
        <location evidence="1">Membrane raft</location>
    </subcellularLocation>
    <subcellularLocation>
        <location evidence="5 6">Perikaryon</location>
    </subcellularLocation>
    <subcellularLocation>
        <location evidence="6">Cell projection</location>
    </subcellularLocation>
    <text evidence="5 6">Localized to the surface of neurons, including axons.</text>
</comment>
<comment type="alternative products">
    <event type="alternative splicing"/>
    <isoform>
        <id>Q80WD0-1</id>
        <name evidence="5">1</name>
        <sequence type="displayed"/>
    </isoform>
    <isoform>
        <id>Q80WD0-2</id>
        <name evidence="8">2</name>
        <sequence type="described" ref="VSP_051945 VSP_051946"/>
    </isoform>
</comment>
<comment type="tissue specificity">
    <text evidence="5 6">Detected in brain (at protein level) (PubMed:15673660). Expressed in various regions of the brain, including the cerebral cortex, hippocampus, striatum, thalamus and cerebellum (PubMed:12694398).</text>
</comment>
<comment type="similarity">
    <text evidence="12">Belongs to the Nogo receptor family.</text>
</comment>
<sequence>MLRKGCCVELLLLLLAGELPLSGGCPRDCVCYPSPMTVSCQAHNFAAIPEGIPEDSERIFLQNNHITFLQQGHFSPAMVTLWIYSNNITFIAPNTFEGFVHLEELDLGDNRQLRTLAPETFQGLVKLHALYLYKCGLSSLPAGIFGGLHSLQYLYLQDNHIEYLQDDIFVDLVNLSHLFLHGNKLWSLGQGIFRGLVNLDRLLLHENQLQWVHHKAFHDLHRLTTLFLFNNSLTELQGDCLAPLVALEFLRLNGNAWDCGCRARSLWEWLRRFRGSSSVVPCATPELRQGQDLKSLRVEDFRNCTGPASPHQIKSHTLSTSDRAARKEHHPSHGASRDKGHPHGHLPGSRSGSKKPGKNCTSHRNRNQISKGSAGKELPELQDYAPDYQHKFSFDIMPTARPKRKGKCARRTPIRAPSGVQQASSGTALGVSLLAWILGLVVSLR</sequence>
<evidence type="ECO:0000250" key="1">
    <source>
        <dbReference type="UniProtKB" id="Q86UN2"/>
    </source>
</evidence>
<evidence type="ECO:0000250" key="2">
    <source>
        <dbReference type="UniProtKB" id="Q8K0S5"/>
    </source>
</evidence>
<evidence type="ECO:0000255" key="3"/>
<evidence type="ECO:0000256" key="4">
    <source>
        <dbReference type="SAM" id="MobiDB-lite"/>
    </source>
</evidence>
<evidence type="ECO:0000269" key="5">
    <source>
    </source>
</evidence>
<evidence type="ECO:0000269" key="6">
    <source>
    </source>
</evidence>
<evidence type="ECO:0000269" key="7">
    <source>
    </source>
</evidence>
<evidence type="ECO:0000269" key="8">
    <source ref="2"/>
</evidence>
<evidence type="ECO:0000303" key="9">
    <source>
    </source>
</evidence>
<evidence type="ECO:0000303" key="10">
    <source>
    </source>
</evidence>
<evidence type="ECO:0000303" key="11">
    <source ref="2"/>
</evidence>
<evidence type="ECO:0000305" key="12"/>
<evidence type="ECO:0000312" key="13">
    <source>
        <dbReference type="EMBL" id="AAP21838.1"/>
    </source>
</evidence>
<evidence type="ECO:0000312" key="14">
    <source>
        <dbReference type="EMBL" id="AAP74960.1"/>
    </source>
</evidence>
<evidence type="ECO:0000312" key="15">
    <source>
        <dbReference type="RGD" id="727812"/>
    </source>
</evidence>
<protein>
    <recommendedName>
        <fullName>Reticulon-4 receptor-like 1</fullName>
    </recommendedName>
    <alternativeName>
        <fullName>Nogo receptor-like 2</fullName>
    </alternativeName>
    <alternativeName>
        <fullName evidence="9">Nogo-66 receptor homolog 2</fullName>
    </alternativeName>
    <alternativeName>
        <fullName>Nogo-66 receptor-related protein 3</fullName>
        <shortName evidence="10">NgR3</shortName>
    </alternativeName>
</protein>
<reference evidence="12 13" key="1">
    <citation type="journal article" date="2003" name="J. Neurochem.">
        <title>Characterization of two novel proteins, NgRH1 and NgRH2, structurally and biochemically homologous to the Nogo-66 receptor.</title>
        <authorList>
            <person name="Pignot V."/>
            <person name="Hein A.E."/>
            <person name="Barske C."/>
            <person name="Wiessner C."/>
            <person name="Walmsley A.R."/>
            <person name="Kaupmann K."/>
            <person name="Mayeur H."/>
            <person name="Sommer B."/>
            <person name="Mir A.K."/>
            <person name="Frentzel S."/>
        </authorList>
    </citation>
    <scope>NUCLEOTIDE SEQUENCE [MRNA] (ISOFORM 1)</scope>
    <scope>SUBCELLULAR LOCATION</scope>
    <scope>TISSUE SPECIFICITY</scope>
    <source>
        <strain evidence="13">Sprague-Dawley</strain>
    </source>
</reference>
<reference evidence="12 14" key="2">
    <citation type="submission" date="2003-05" db="EMBL/GenBank/DDBJ databases">
        <title>Cloning and expression of rat NGRH1 and NGRH2.</title>
        <authorList>
            <person name="Jin W.-L."/>
            <person name="Long M."/>
            <person name="Ju G."/>
        </authorList>
    </citation>
    <scope>NUCLEOTIDE SEQUENCE [MRNA] (ISOFORM 2)</scope>
    <source>
        <strain evidence="14">Sprague-Dawley</strain>
        <tissue evidence="14">Brain</tissue>
    </source>
</reference>
<reference key="3">
    <citation type="journal article" date="2004" name="Genome Res.">
        <title>The status, quality, and expansion of the NIH full-length cDNA project: the Mammalian Gene Collection (MGC).</title>
        <authorList>
            <consortium name="The MGC Project Team"/>
        </authorList>
    </citation>
    <scope>NUCLEOTIDE SEQUENCE [LARGE SCALE MRNA] (ISOFORM 1)</scope>
    <source>
        <tissue>Brain</tissue>
    </source>
</reference>
<reference key="4">
    <citation type="journal article" date="2005" name="J. Neurosci.">
        <title>The Nogo-66 receptor homolog NgR2 is a sialic acid-dependent receptor selective for myelin-associated glycoprotein.</title>
        <authorList>
            <person name="Venkatesh K."/>
            <person name="Chivatakarn O."/>
            <person name="Lee H."/>
            <person name="Joshi P.S."/>
            <person name="Kantor D.B."/>
            <person name="Newman B.A."/>
            <person name="Mage R."/>
            <person name="Rader C."/>
            <person name="Giger R.J."/>
        </authorList>
    </citation>
    <scope>SUBCELLULAR LOCATION</scope>
    <scope>TISSUE SPECIFICITY</scope>
    <scope>LACK OF INTERACTION WITH MAG; OMG AND RTN4</scope>
</reference>
<reference key="5">
    <citation type="journal article" date="2012" name="Neuron">
        <title>The Nogo receptor family restricts synapse number in the developing hippocampus.</title>
        <authorList>
            <person name="Wills Z.P."/>
            <person name="Mandel-Brehm C."/>
            <person name="Mardinly A.R."/>
            <person name="McCord A.E."/>
            <person name="Giger R.J."/>
            <person name="Greenberg M.E."/>
        </authorList>
    </citation>
    <scope>FUNCTION</scope>
</reference>
<name>R4RL1_RAT</name>
<gene>
    <name evidence="15" type="primary">Rtn4rl1</name>
    <name evidence="9 13" type="synonym">Ngrh2</name>
</gene>
<proteinExistence type="evidence at protein level"/>